<gene>
    <name evidence="1" type="primary">carB</name>
    <name type="ordered locus">lwe1854</name>
</gene>
<protein>
    <recommendedName>
        <fullName evidence="1">Carbamoyl phosphate synthase large chain</fullName>
        <ecNumber evidence="1">6.3.4.16</ecNumber>
        <ecNumber evidence="1">6.3.5.5</ecNumber>
    </recommendedName>
    <alternativeName>
        <fullName evidence="1">Carbamoyl phosphate synthetase ammonia chain</fullName>
    </alternativeName>
</protein>
<proteinExistence type="inferred from homology"/>
<comment type="function">
    <text evidence="1">Large subunit of the glutamine-dependent carbamoyl phosphate synthetase (CPSase). CPSase catalyzes the formation of carbamoyl phosphate from the ammonia moiety of glutamine, carbonate, and phosphate donated by ATP, constituting the first step of 2 biosynthetic pathways, one leading to arginine and/or urea and the other to pyrimidine nucleotides. The large subunit (synthetase) binds the substrates ammonia (free or transferred from glutamine from the small subunit), hydrogencarbonate and ATP and carries out an ATP-coupled ligase reaction, activating hydrogencarbonate by forming carboxy phosphate which reacts with ammonia to form carbamoyl phosphate.</text>
</comment>
<comment type="catalytic activity">
    <reaction evidence="1">
        <text>hydrogencarbonate + L-glutamine + 2 ATP + H2O = carbamoyl phosphate + L-glutamate + 2 ADP + phosphate + 2 H(+)</text>
        <dbReference type="Rhea" id="RHEA:18633"/>
        <dbReference type="ChEBI" id="CHEBI:15377"/>
        <dbReference type="ChEBI" id="CHEBI:15378"/>
        <dbReference type="ChEBI" id="CHEBI:17544"/>
        <dbReference type="ChEBI" id="CHEBI:29985"/>
        <dbReference type="ChEBI" id="CHEBI:30616"/>
        <dbReference type="ChEBI" id="CHEBI:43474"/>
        <dbReference type="ChEBI" id="CHEBI:58228"/>
        <dbReference type="ChEBI" id="CHEBI:58359"/>
        <dbReference type="ChEBI" id="CHEBI:456216"/>
        <dbReference type="EC" id="6.3.5.5"/>
    </reaction>
</comment>
<comment type="catalytic activity">
    <molecule>Carbamoyl phosphate synthase large chain</molecule>
    <reaction evidence="1">
        <text>hydrogencarbonate + NH4(+) + 2 ATP = carbamoyl phosphate + 2 ADP + phosphate + 2 H(+)</text>
        <dbReference type="Rhea" id="RHEA:18029"/>
        <dbReference type="ChEBI" id="CHEBI:15378"/>
        <dbReference type="ChEBI" id="CHEBI:17544"/>
        <dbReference type="ChEBI" id="CHEBI:28938"/>
        <dbReference type="ChEBI" id="CHEBI:30616"/>
        <dbReference type="ChEBI" id="CHEBI:43474"/>
        <dbReference type="ChEBI" id="CHEBI:58228"/>
        <dbReference type="ChEBI" id="CHEBI:456216"/>
        <dbReference type="EC" id="6.3.4.16"/>
    </reaction>
</comment>
<comment type="cofactor">
    <cofactor evidence="1">
        <name>Mg(2+)</name>
        <dbReference type="ChEBI" id="CHEBI:18420"/>
    </cofactor>
    <cofactor evidence="1">
        <name>Mn(2+)</name>
        <dbReference type="ChEBI" id="CHEBI:29035"/>
    </cofactor>
    <text evidence="1">Binds 4 Mg(2+) or Mn(2+) ions per subunit.</text>
</comment>
<comment type="pathway">
    <text evidence="1">Amino-acid biosynthesis; L-arginine biosynthesis; carbamoyl phosphate from bicarbonate: step 1/1.</text>
</comment>
<comment type="pathway">
    <text evidence="1">Pyrimidine metabolism; UMP biosynthesis via de novo pathway; (S)-dihydroorotate from bicarbonate: step 1/3.</text>
</comment>
<comment type="subunit">
    <text evidence="1">Composed of two chains; the small (or glutamine) chain promotes the hydrolysis of glutamine to ammonia, which is used by the large (or ammonia) chain to synthesize carbamoyl phosphate. Tetramer of heterodimers (alpha,beta)4.</text>
</comment>
<comment type="domain">
    <text evidence="1">The large subunit is composed of 2 ATP-grasp domains that are involved in binding the 2 ATP molecules needed for carbamoyl phosphate synthesis. The N-terminal ATP-grasp domain (referred to as the carboxyphosphate synthetic component) catalyzes the ATP-dependent phosphorylation of hydrogencarbonate to carboxyphosphate and the subsequent nucleophilic attack by ammonia to form a carbamate intermediate. The C-terminal ATP-grasp domain (referred to as the carbamoyl phosphate synthetic component) then catalyzes the phosphorylation of carbamate with the second ATP to form the end product carbamoyl phosphate. The reactive and unstable enzyme intermediates are sequentially channeled from one active site to the next through the interior of the protein over a distance of at least 96 A.</text>
</comment>
<comment type="similarity">
    <text evidence="1">Belongs to the CarB family.</text>
</comment>
<dbReference type="EC" id="6.3.4.16" evidence="1"/>
<dbReference type="EC" id="6.3.5.5" evidence="1"/>
<dbReference type="EMBL" id="AM263198">
    <property type="protein sequence ID" value="CAK21272.1"/>
    <property type="molecule type" value="Genomic_DNA"/>
</dbReference>
<dbReference type="RefSeq" id="WP_011702624.1">
    <property type="nucleotide sequence ID" value="NC_008555.1"/>
</dbReference>
<dbReference type="SMR" id="A0AJU0"/>
<dbReference type="STRING" id="386043.lwe1854"/>
<dbReference type="GeneID" id="61189755"/>
<dbReference type="KEGG" id="lwe:lwe1854"/>
<dbReference type="eggNOG" id="COG0458">
    <property type="taxonomic scope" value="Bacteria"/>
</dbReference>
<dbReference type="HOGENOM" id="CLU_000513_1_0_9"/>
<dbReference type="OrthoDB" id="9804197at2"/>
<dbReference type="UniPathway" id="UPA00068">
    <property type="reaction ID" value="UER00171"/>
</dbReference>
<dbReference type="UniPathway" id="UPA00070">
    <property type="reaction ID" value="UER00115"/>
</dbReference>
<dbReference type="Proteomes" id="UP000000779">
    <property type="component" value="Chromosome"/>
</dbReference>
<dbReference type="GO" id="GO:0005737">
    <property type="term" value="C:cytoplasm"/>
    <property type="evidence" value="ECO:0007669"/>
    <property type="project" value="TreeGrafter"/>
</dbReference>
<dbReference type="GO" id="GO:0005524">
    <property type="term" value="F:ATP binding"/>
    <property type="evidence" value="ECO:0007669"/>
    <property type="project" value="UniProtKB-UniRule"/>
</dbReference>
<dbReference type="GO" id="GO:0004087">
    <property type="term" value="F:carbamoyl-phosphate synthase (ammonia) activity"/>
    <property type="evidence" value="ECO:0007669"/>
    <property type="project" value="RHEA"/>
</dbReference>
<dbReference type="GO" id="GO:0004088">
    <property type="term" value="F:carbamoyl-phosphate synthase (glutamine-hydrolyzing) activity"/>
    <property type="evidence" value="ECO:0007669"/>
    <property type="project" value="UniProtKB-UniRule"/>
</dbReference>
<dbReference type="GO" id="GO:0046872">
    <property type="term" value="F:metal ion binding"/>
    <property type="evidence" value="ECO:0007669"/>
    <property type="project" value="UniProtKB-KW"/>
</dbReference>
<dbReference type="GO" id="GO:0044205">
    <property type="term" value="P:'de novo' UMP biosynthetic process"/>
    <property type="evidence" value="ECO:0007669"/>
    <property type="project" value="UniProtKB-UniRule"/>
</dbReference>
<dbReference type="GO" id="GO:0006541">
    <property type="term" value="P:glutamine metabolic process"/>
    <property type="evidence" value="ECO:0007669"/>
    <property type="project" value="TreeGrafter"/>
</dbReference>
<dbReference type="GO" id="GO:0006526">
    <property type="term" value="P:L-arginine biosynthetic process"/>
    <property type="evidence" value="ECO:0007669"/>
    <property type="project" value="UniProtKB-UniRule"/>
</dbReference>
<dbReference type="CDD" id="cd01424">
    <property type="entry name" value="MGS_CPS_II"/>
    <property type="match status" value="1"/>
</dbReference>
<dbReference type="FunFam" id="1.10.1030.10:FF:000002">
    <property type="entry name" value="Carbamoyl-phosphate synthase large chain"/>
    <property type="match status" value="1"/>
</dbReference>
<dbReference type="FunFam" id="3.30.1490.20:FF:000001">
    <property type="entry name" value="Carbamoyl-phosphate synthase large chain"/>
    <property type="match status" value="1"/>
</dbReference>
<dbReference type="FunFam" id="3.30.470.20:FF:000001">
    <property type="entry name" value="Carbamoyl-phosphate synthase large chain"/>
    <property type="match status" value="1"/>
</dbReference>
<dbReference type="FunFam" id="3.30.470.20:FF:000026">
    <property type="entry name" value="Carbamoyl-phosphate synthase large chain"/>
    <property type="match status" value="1"/>
</dbReference>
<dbReference type="FunFam" id="3.40.50.1380:FF:000011">
    <property type="entry name" value="Carbamoyl-phosphate synthase large chain"/>
    <property type="match status" value="1"/>
</dbReference>
<dbReference type="FunFam" id="3.40.50.20:FF:000001">
    <property type="entry name" value="Carbamoyl-phosphate synthase large chain"/>
    <property type="match status" value="2"/>
</dbReference>
<dbReference type="Gene3D" id="3.40.50.20">
    <property type="match status" value="2"/>
</dbReference>
<dbReference type="Gene3D" id="3.30.1490.20">
    <property type="entry name" value="ATP-grasp fold, A domain"/>
    <property type="match status" value="1"/>
</dbReference>
<dbReference type="Gene3D" id="3.30.470.20">
    <property type="entry name" value="ATP-grasp fold, B domain"/>
    <property type="match status" value="2"/>
</dbReference>
<dbReference type="Gene3D" id="1.10.1030.10">
    <property type="entry name" value="Carbamoyl-phosphate synthetase, large subunit oligomerisation domain"/>
    <property type="match status" value="1"/>
</dbReference>
<dbReference type="Gene3D" id="3.40.50.1380">
    <property type="entry name" value="Methylglyoxal synthase-like domain"/>
    <property type="match status" value="1"/>
</dbReference>
<dbReference type="HAMAP" id="MF_01210_A">
    <property type="entry name" value="CPSase_L_chain_A"/>
    <property type="match status" value="1"/>
</dbReference>
<dbReference type="HAMAP" id="MF_01210_B">
    <property type="entry name" value="CPSase_L_chain_B"/>
    <property type="match status" value="1"/>
</dbReference>
<dbReference type="InterPro" id="IPR011761">
    <property type="entry name" value="ATP-grasp"/>
</dbReference>
<dbReference type="InterPro" id="IPR013815">
    <property type="entry name" value="ATP_grasp_subdomain_1"/>
</dbReference>
<dbReference type="InterPro" id="IPR006275">
    <property type="entry name" value="CarbamoylP_synth_lsu"/>
</dbReference>
<dbReference type="InterPro" id="IPR005480">
    <property type="entry name" value="CarbamoylP_synth_lsu_oligo"/>
</dbReference>
<dbReference type="InterPro" id="IPR036897">
    <property type="entry name" value="CarbamoylP_synth_lsu_oligo_sf"/>
</dbReference>
<dbReference type="InterPro" id="IPR005479">
    <property type="entry name" value="CbamoylP_synth_lsu-like_ATP-bd"/>
</dbReference>
<dbReference type="InterPro" id="IPR005483">
    <property type="entry name" value="CbamoylP_synth_lsu_CPSase_dom"/>
</dbReference>
<dbReference type="InterPro" id="IPR011607">
    <property type="entry name" value="MGS-like_dom"/>
</dbReference>
<dbReference type="InterPro" id="IPR036914">
    <property type="entry name" value="MGS-like_dom_sf"/>
</dbReference>
<dbReference type="InterPro" id="IPR033937">
    <property type="entry name" value="MGS_CPS_CarB"/>
</dbReference>
<dbReference type="InterPro" id="IPR016185">
    <property type="entry name" value="PreATP-grasp_dom_sf"/>
</dbReference>
<dbReference type="NCBIfam" id="TIGR01369">
    <property type="entry name" value="CPSaseII_lrg"/>
    <property type="match status" value="1"/>
</dbReference>
<dbReference type="NCBIfam" id="NF003671">
    <property type="entry name" value="PRK05294.1"/>
    <property type="match status" value="1"/>
</dbReference>
<dbReference type="NCBIfam" id="NF009455">
    <property type="entry name" value="PRK12815.1"/>
    <property type="match status" value="1"/>
</dbReference>
<dbReference type="PANTHER" id="PTHR11405:SF53">
    <property type="entry name" value="CARBAMOYL-PHOSPHATE SYNTHASE [AMMONIA], MITOCHONDRIAL"/>
    <property type="match status" value="1"/>
</dbReference>
<dbReference type="PANTHER" id="PTHR11405">
    <property type="entry name" value="CARBAMOYLTRANSFERASE FAMILY MEMBER"/>
    <property type="match status" value="1"/>
</dbReference>
<dbReference type="Pfam" id="PF02786">
    <property type="entry name" value="CPSase_L_D2"/>
    <property type="match status" value="2"/>
</dbReference>
<dbReference type="Pfam" id="PF02787">
    <property type="entry name" value="CPSase_L_D3"/>
    <property type="match status" value="1"/>
</dbReference>
<dbReference type="Pfam" id="PF02142">
    <property type="entry name" value="MGS"/>
    <property type="match status" value="1"/>
</dbReference>
<dbReference type="PRINTS" id="PR00098">
    <property type="entry name" value="CPSASE"/>
</dbReference>
<dbReference type="SMART" id="SM01096">
    <property type="entry name" value="CPSase_L_D3"/>
    <property type="match status" value="1"/>
</dbReference>
<dbReference type="SMART" id="SM00851">
    <property type="entry name" value="MGS"/>
    <property type="match status" value="1"/>
</dbReference>
<dbReference type="SUPFAM" id="SSF48108">
    <property type="entry name" value="Carbamoyl phosphate synthetase, large subunit connection domain"/>
    <property type="match status" value="1"/>
</dbReference>
<dbReference type="SUPFAM" id="SSF56059">
    <property type="entry name" value="Glutathione synthetase ATP-binding domain-like"/>
    <property type="match status" value="2"/>
</dbReference>
<dbReference type="SUPFAM" id="SSF52335">
    <property type="entry name" value="Methylglyoxal synthase-like"/>
    <property type="match status" value="1"/>
</dbReference>
<dbReference type="SUPFAM" id="SSF52440">
    <property type="entry name" value="PreATP-grasp domain"/>
    <property type="match status" value="2"/>
</dbReference>
<dbReference type="PROSITE" id="PS50975">
    <property type="entry name" value="ATP_GRASP"/>
    <property type="match status" value="2"/>
</dbReference>
<dbReference type="PROSITE" id="PS00866">
    <property type="entry name" value="CPSASE_1"/>
    <property type="match status" value="2"/>
</dbReference>
<dbReference type="PROSITE" id="PS00867">
    <property type="entry name" value="CPSASE_2"/>
    <property type="match status" value="2"/>
</dbReference>
<dbReference type="PROSITE" id="PS51855">
    <property type="entry name" value="MGS"/>
    <property type="match status" value="1"/>
</dbReference>
<sequence>MPKRDDIKTILVIGSGPIVIGQAAEFDYAGTQACLSLKEEGYRVVLVNSNPATIMTDAEMADKVYIEPITLDFVSRIIRKERPDAILPTLGGQTGLNMAMELSAAGILDECNVEVLGTDLTAIKKAEDREAFRDLMNELGEPVPESDIIHNLDEAYSFVERIGYPVIVRPAYTLGGSGGGICHNEQELIETVTSGLKLSPVTQCLLEKSIAGFKEVEYEVMRDANNNAMVVCNMENIDPVGIHTGDSIVVAPSQTLSDREYQLLRDVSLKIIRALEIEGGCNVQLALDPDSYNYYVIEVNPRVSRSSALASKATGYPIAKLAAKIAVGLTLDEVRNPVTGTTFAHFEPTLDYVVAKIPRFAFDKFEQADRRLGTQMKATGEVMAIGRSWEEALLKAVRSLEVGADHLLLEEAENADEETLERKICFPEDDRLFFLAAALRRGQTIEQLHEKTKIDLFFLYKLSKSIELENRVKENPQNEAILAEAKRAGFSDAFLATCWNIDEQAIYDLRKAQNLFPVYKMVDTCAAEFESTTPYFYSTYEEENESTRSAKESVIVLGSGPIRIGQGVEFDYATVHSVWAIQQAGYEAIIINNNPETVSTDFSISDKLYFEPLTLEDVMHVIEIEQPLGVVVQFGGQTAINLADGLAKRGVKILGTSLEDTDRAENRDAFEKALEILQIPQPAGKTATSVEEAIKVATDIGYPVLVRPSYVLGGRAMEIVESEEALKHYMTNAVKVNPKHPVLVDRYVSGQEVEVDAISDGENVLIPGIMEHIERAGVHSGDSIAVYPAQRLSQQVKNTIVDYTTRLATGLNIIGMLNIQYVVDGEEVFVIEVNPRSSRTAPFLSKITEIPMANVATRVILGENLIDLGYTPGLAPEKQEIFVKVPVFSFAKLRSVDTSLGPEMKSTGEVMGKDVTLEKALYKGFVASGTTMHDYGTVLLTVADRDKKEAVELAKRFNRIGFTIMATKGTASTLEEAEIPVSQVKKIGENQETLIDYIRNGQVTLVVNTLTTGKRPERDGFQIRRESVENGIPVCTSLDTAEAILRVLESRSFELESMNASEVKQPKVRV</sequence>
<feature type="chain" id="PRO_1000066361" description="Carbamoyl phosphate synthase large chain">
    <location>
        <begin position="1"/>
        <end position="1070"/>
    </location>
</feature>
<feature type="domain" description="ATP-grasp 1" evidence="1">
    <location>
        <begin position="133"/>
        <end position="327"/>
    </location>
</feature>
<feature type="domain" description="ATP-grasp 2" evidence="1">
    <location>
        <begin position="671"/>
        <end position="861"/>
    </location>
</feature>
<feature type="domain" description="MGS-like" evidence="1">
    <location>
        <begin position="930"/>
        <end position="1070"/>
    </location>
</feature>
<feature type="region of interest" description="Carboxyphosphate synthetic domain" evidence="1">
    <location>
        <begin position="1"/>
        <end position="401"/>
    </location>
</feature>
<feature type="region of interest" description="Oligomerization domain" evidence="1">
    <location>
        <begin position="402"/>
        <end position="546"/>
    </location>
</feature>
<feature type="region of interest" description="Carbamoyl phosphate synthetic domain" evidence="1">
    <location>
        <begin position="547"/>
        <end position="929"/>
    </location>
</feature>
<feature type="region of interest" description="Allosteric domain" evidence="1">
    <location>
        <begin position="930"/>
        <end position="1070"/>
    </location>
</feature>
<feature type="binding site" evidence="1">
    <location>
        <position position="129"/>
    </location>
    <ligand>
        <name>ATP</name>
        <dbReference type="ChEBI" id="CHEBI:30616"/>
        <label>1</label>
    </ligand>
</feature>
<feature type="binding site" evidence="1">
    <location>
        <position position="169"/>
    </location>
    <ligand>
        <name>ATP</name>
        <dbReference type="ChEBI" id="CHEBI:30616"/>
        <label>1</label>
    </ligand>
</feature>
<feature type="binding site" evidence="1">
    <location>
        <position position="175"/>
    </location>
    <ligand>
        <name>ATP</name>
        <dbReference type="ChEBI" id="CHEBI:30616"/>
        <label>1</label>
    </ligand>
</feature>
<feature type="binding site" evidence="1">
    <location>
        <position position="176"/>
    </location>
    <ligand>
        <name>ATP</name>
        <dbReference type="ChEBI" id="CHEBI:30616"/>
        <label>1</label>
    </ligand>
</feature>
<feature type="binding site" evidence="1">
    <location>
        <position position="208"/>
    </location>
    <ligand>
        <name>ATP</name>
        <dbReference type="ChEBI" id="CHEBI:30616"/>
        <label>1</label>
    </ligand>
</feature>
<feature type="binding site" evidence="1">
    <location>
        <position position="210"/>
    </location>
    <ligand>
        <name>ATP</name>
        <dbReference type="ChEBI" id="CHEBI:30616"/>
        <label>1</label>
    </ligand>
</feature>
<feature type="binding site" evidence="1">
    <location>
        <position position="215"/>
    </location>
    <ligand>
        <name>ATP</name>
        <dbReference type="ChEBI" id="CHEBI:30616"/>
        <label>1</label>
    </ligand>
</feature>
<feature type="binding site" evidence="1">
    <location>
        <position position="241"/>
    </location>
    <ligand>
        <name>ATP</name>
        <dbReference type="ChEBI" id="CHEBI:30616"/>
        <label>1</label>
    </ligand>
</feature>
<feature type="binding site" evidence="1">
    <location>
        <position position="242"/>
    </location>
    <ligand>
        <name>ATP</name>
        <dbReference type="ChEBI" id="CHEBI:30616"/>
        <label>1</label>
    </ligand>
</feature>
<feature type="binding site" evidence="1">
    <location>
        <position position="243"/>
    </location>
    <ligand>
        <name>ATP</name>
        <dbReference type="ChEBI" id="CHEBI:30616"/>
        <label>1</label>
    </ligand>
</feature>
<feature type="binding site" evidence="1">
    <location>
        <position position="284"/>
    </location>
    <ligand>
        <name>ATP</name>
        <dbReference type="ChEBI" id="CHEBI:30616"/>
        <label>1</label>
    </ligand>
</feature>
<feature type="binding site" evidence="1">
    <location>
        <position position="284"/>
    </location>
    <ligand>
        <name>Mg(2+)</name>
        <dbReference type="ChEBI" id="CHEBI:18420"/>
        <label>1</label>
    </ligand>
</feature>
<feature type="binding site" evidence="1">
    <location>
        <position position="284"/>
    </location>
    <ligand>
        <name>Mn(2+)</name>
        <dbReference type="ChEBI" id="CHEBI:29035"/>
        <label>1</label>
    </ligand>
</feature>
<feature type="binding site" evidence="1">
    <location>
        <position position="298"/>
    </location>
    <ligand>
        <name>ATP</name>
        <dbReference type="ChEBI" id="CHEBI:30616"/>
        <label>1</label>
    </ligand>
</feature>
<feature type="binding site" evidence="1">
    <location>
        <position position="298"/>
    </location>
    <ligand>
        <name>Mg(2+)</name>
        <dbReference type="ChEBI" id="CHEBI:18420"/>
        <label>1</label>
    </ligand>
</feature>
<feature type="binding site" evidence="1">
    <location>
        <position position="298"/>
    </location>
    <ligand>
        <name>Mg(2+)</name>
        <dbReference type="ChEBI" id="CHEBI:18420"/>
        <label>2</label>
    </ligand>
</feature>
<feature type="binding site" evidence="1">
    <location>
        <position position="298"/>
    </location>
    <ligand>
        <name>Mn(2+)</name>
        <dbReference type="ChEBI" id="CHEBI:29035"/>
        <label>1</label>
    </ligand>
</feature>
<feature type="binding site" evidence="1">
    <location>
        <position position="298"/>
    </location>
    <ligand>
        <name>Mn(2+)</name>
        <dbReference type="ChEBI" id="CHEBI:29035"/>
        <label>2</label>
    </ligand>
</feature>
<feature type="binding site" evidence="1">
    <location>
        <position position="300"/>
    </location>
    <ligand>
        <name>Mg(2+)</name>
        <dbReference type="ChEBI" id="CHEBI:18420"/>
        <label>2</label>
    </ligand>
</feature>
<feature type="binding site" evidence="1">
    <location>
        <position position="300"/>
    </location>
    <ligand>
        <name>Mn(2+)</name>
        <dbReference type="ChEBI" id="CHEBI:29035"/>
        <label>2</label>
    </ligand>
</feature>
<feature type="binding site" evidence="1">
    <location>
        <position position="707"/>
    </location>
    <ligand>
        <name>ATP</name>
        <dbReference type="ChEBI" id="CHEBI:30616"/>
        <label>2</label>
    </ligand>
</feature>
<feature type="binding site" evidence="1">
    <location>
        <position position="746"/>
    </location>
    <ligand>
        <name>ATP</name>
        <dbReference type="ChEBI" id="CHEBI:30616"/>
        <label>2</label>
    </ligand>
</feature>
<feature type="binding site" evidence="1">
    <location>
        <position position="748"/>
    </location>
    <ligand>
        <name>ATP</name>
        <dbReference type="ChEBI" id="CHEBI:30616"/>
        <label>2</label>
    </ligand>
</feature>
<feature type="binding site" evidence="1">
    <location>
        <position position="752"/>
    </location>
    <ligand>
        <name>ATP</name>
        <dbReference type="ChEBI" id="CHEBI:30616"/>
        <label>2</label>
    </ligand>
</feature>
<feature type="binding site" evidence="1">
    <location>
        <position position="777"/>
    </location>
    <ligand>
        <name>ATP</name>
        <dbReference type="ChEBI" id="CHEBI:30616"/>
        <label>2</label>
    </ligand>
</feature>
<feature type="binding site" evidence="1">
    <location>
        <position position="778"/>
    </location>
    <ligand>
        <name>ATP</name>
        <dbReference type="ChEBI" id="CHEBI:30616"/>
        <label>2</label>
    </ligand>
</feature>
<feature type="binding site" evidence="1">
    <location>
        <position position="779"/>
    </location>
    <ligand>
        <name>ATP</name>
        <dbReference type="ChEBI" id="CHEBI:30616"/>
        <label>2</label>
    </ligand>
</feature>
<feature type="binding site" evidence="1">
    <location>
        <position position="780"/>
    </location>
    <ligand>
        <name>ATP</name>
        <dbReference type="ChEBI" id="CHEBI:30616"/>
        <label>2</label>
    </ligand>
</feature>
<feature type="binding site" evidence="1">
    <location>
        <position position="820"/>
    </location>
    <ligand>
        <name>ATP</name>
        <dbReference type="ChEBI" id="CHEBI:30616"/>
        <label>2</label>
    </ligand>
</feature>
<feature type="binding site" evidence="1">
    <location>
        <position position="820"/>
    </location>
    <ligand>
        <name>Mg(2+)</name>
        <dbReference type="ChEBI" id="CHEBI:18420"/>
        <label>3</label>
    </ligand>
</feature>
<feature type="binding site" evidence="1">
    <location>
        <position position="820"/>
    </location>
    <ligand>
        <name>Mn(2+)</name>
        <dbReference type="ChEBI" id="CHEBI:29035"/>
        <label>3</label>
    </ligand>
</feature>
<feature type="binding site" evidence="1">
    <location>
        <position position="832"/>
    </location>
    <ligand>
        <name>ATP</name>
        <dbReference type="ChEBI" id="CHEBI:30616"/>
        <label>2</label>
    </ligand>
</feature>
<feature type="binding site" evidence="1">
    <location>
        <position position="832"/>
    </location>
    <ligand>
        <name>Mg(2+)</name>
        <dbReference type="ChEBI" id="CHEBI:18420"/>
        <label>3</label>
    </ligand>
</feature>
<feature type="binding site" evidence="1">
    <location>
        <position position="832"/>
    </location>
    <ligand>
        <name>Mg(2+)</name>
        <dbReference type="ChEBI" id="CHEBI:18420"/>
        <label>4</label>
    </ligand>
</feature>
<feature type="binding site" evidence="1">
    <location>
        <position position="832"/>
    </location>
    <ligand>
        <name>Mn(2+)</name>
        <dbReference type="ChEBI" id="CHEBI:29035"/>
        <label>3</label>
    </ligand>
</feature>
<feature type="binding site" evidence="1">
    <location>
        <position position="832"/>
    </location>
    <ligand>
        <name>Mn(2+)</name>
        <dbReference type="ChEBI" id="CHEBI:29035"/>
        <label>4</label>
    </ligand>
</feature>
<feature type="binding site" evidence="1">
    <location>
        <position position="834"/>
    </location>
    <ligand>
        <name>Mg(2+)</name>
        <dbReference type="ChEBI" id="CHEBI:18420"/>
        <label>4</label>
    </ligand>
</feature>
<feature type="binding site" evidence="1">
    <location>
        <position position="834"/>
    </location>
    <ligand>
        <name>Mn(2+)</name>
        <dbReference type="ChEBI" id="CHEBI:29035"/>
        <label>4</label>
    </ligand>
</feature>
<reference key="1">
    <citation type="journal article" date="2006" name="J. Bacteriol.">
        <title>Whole-genome sequence of Listeria welshimeri reveals common steps in genome reduction with Listeria innocua as compared to Listeria monocytogenes.</title>
        <authorList>
            <person name="Hain T."/>
            <person name="Steinweg C."/>
            <person name="Kuenne C.T."/>
            <person name="Billion A."/>
            <person name="Ghai R."/>
            <person name="Chatterjee S.S."/>
            <person name="Domann E."/>
            <person name="Kaerst U."/>
            <person name="Goesmann A."/>
            <person name="Bekel T."/>
            <person name="Bartels D."/>
            <person name="Kaiser O."/>
            <person name="Meyer F."/>
            <person name="Puehler A."/>
            <person name="Weisshaar B."/>
            <person name="Wehland J."/>
            <person name="Liang C."/>
            <person name="Dandekar T."/>
            <person name="Lampidis R."/>
            <person name="Kreft J."/>
            <person name="Goebel W."/>
            <person name="Chakraborty T."/>
        </authorList>
    </citation>
    <scope>NUCLEOTIDE SEQUENCE [LARGE SCALE GENOMIC DNA]</scope>
    <source>
        <strain>ATCC 35897 / DSM 20650 / CCUG 15529 / CIP 8149 / NCTC 11857 / SLCC 5334 / V8</strain>
    </source>
</reference>
<accession>A0AJU0</accession>
<organism>
    <name type="scientific">Listeria welshimeri serovar 6b (strain ATCC 35897 / DSM 20650 / CCUG 15529 / CIP 8149 / NCTC 11857 / SLCC 5334 / V8)</name>
    <dbReference type="NCBI Taxonomy" id="386043"/>
    <lineage>
        <taxon>Bacteria</taxon>
        <taxon>Bacillati</taxon>
        <taxon>Bacillota</taxon>
        <taxon>Bacilli</taxon>
        <taxon>Bacillales</taxon>
        <taxon>Listeriaceae</taxon>
        <taxon>Listeria</taxon>
    </lineage>
</organism>
<name>CARB_LISW6</name>
<evidence type="ECO:0000255" key="1">
    <source>
        <dbReference type="HAMAP-Rule" id="MF_01210"/>
    </source>
</evidence>
<keyword id="KW-0028">Amino-acid biosynthesis</keyword>
<keyword id="KW-0055">Arginine biosynthesis</keyword>
<keyword id="KW-0067">ATP-binding</keyword>
<keyword id="KW-0436">Ligase</keyword>
<keyword id="KW-0460">Magnesium</keyword>
<keyword id="KW-0464">Manganese</keyword>
<keyword id="KW-0479">Metal-binding</keyword>
<keyword id="KW-0547">Nucleotide-binding</keyword>
<keyword id="KW-0665">Pyrimidine biosynthesis</keyword>
<keyword id="KW-0677">Repeat</keyword>